<dbReference type="EMBL" id="AB006424">
    <property type="protein sequence ID" value="BAA33084.1"/>
    <property type="molecule type" value="Genomic_DNA"/>
</dbReference>
<dbReference type="EMBL" id="AL009126">
    <property type="protein sequence ID" value="CAB11965.1"/>
    <property type="molecule type" value="Genomic_DNA"/>
</dbReference>
<dbReference type="PIR" id="A69746">
    <property type="entry name" value="A69746"/>
</dbReference>
<dbReference type="RefSeq" id="NP_388070.1">
    <property type="nucleotide sequence ID" value="NC_000964.3"/>
</dbReference>
<dbReference type="RefSeq" id="WP_003246471.1">
    <property type="nucleotide sequence ID" value="NZ_OZ025638.1"/>
</dbReference>
<dbReference type="SMR" id="O34663"/>
<dbReference type="FunCoup" id="O34663">
    <property type="interactions" value="156"/>
</dbReference>
<dbReference type="STRING" id="224308.BSU01890"/>
<dbReference type="PaxDb" id="224308-BSU01890"/>
<dbReference type="EnsemblBacteria" id="CAB11965">
    <property type="protein sequence ID" value="CAB11965"/>
    <property type="gene ID" value="BSU_01890"/>
</dbReference>
<dbReference type="GeneID" id="938536"/>
<dbReference type="KEGG" id="bsu:BSU01890"/>
<dbReference type="PATRIC" id="fig|224308.179.peg.196"/>
<dbReference type="eggNOG" id="COG2814">
    <property type="taxonomic scope" value="Bacteria"/>
</dbReference>
<dbReference type="InParanoid" id="O34663"/>
<dbReference type="OrthoDB" id="337363at2"/>
<dbReference type="PhylomeDB" id="O34663"/>
<dbReference type="BioCyc" id="BSUB:BSU01890-MONOMER"/>
<dbReference type="Proteomes" id="UP000001570">
    <property type="component" value="Chromosome"/>
</dbReference>
<dbReference type="GO" id="GO:0005886">
    <property type="term" value="C:plasma membrane"/>
    <property type="evidence" value="ECO:0000318"/>
    <property type="project" value="GO_Central"/>
</dbReference>
<dbReference type="GO" id="GO:0022857">
    <property type="term" value="F:transmembrane transporter activity"/>
    <property type="evidence" value="ECO:0000318"/>
    <property type="project" value="GO_Central"/>
</dbReference>
<dbReference type="GO" id="GO:0055085">
    <property type="term" value="P:transmembrane transport"/>
    <property type="evidence" value="ECO:0000318"/>
    <property type="project" value="GO_Central"/>
</dbReference>
<dbReference type="CDD" id="cd17324">
    <property type="entry name" value="MFS_NepI_like"/>
    <property type="match status" value="1"/>
</dbReference>
<dbReference type="Gene3D" id="1.20.1250.20">
    <property type="entry name" value="MFS general substrate transporter like domains"/>
    <property type="match status" value="1"/>
</dbReference>
<dbReference type="InterPro" id="IPR011701">
    <property type="entry name" value="MFS"/>
</dbReference>
<dbReference type="InterPro" id="IPR020846">
    <property type="entry name" value="MFS_dom"/>
</dbReference>
<dbReference type="InterPro" id="IPR050189">
    <property type="entry name" value="MFS_Efflux_Transporters"/>
</dbReference>
<dbReference type="InterPro" id="IPR036259">
    <property type="entry name" value="MFS_trans_sf"/>
</dbReference>
<dbReference type="PANTHER" id="PTHR43124">
    <property type="entry name" value="PURINE EFFLUX PUMP PBUE"/>
    <property type="match status" value="1"/>
</dbReference>
<dbReference type="PANTHER" id="PTHR43124:SF10">
    <property type="entry name" value="PURINE EFFLUX PUMP PBUE"/>
    <property type="match status" value="1"/>
</dbReference>
<dbReference type="Pfam" id="PF07690">
    <property type="entry name" value="MFS_1"/>
    <property type="match status" value="1"/>
</dbReference>
<dbReference type="SUPFAM" id="SSF103473">
    <property type="entry name" value="MFS general substrate transporter"/>
    <property type="match status" value="1"/>
</dbReference>
<dbReference type="PROSITE" id="PS50850">
    <property type="entry name" value="MFS"/>
    <property type="match status" value="1"/>
</dbReference>
<accession>O34663</accession>
<accession>Q7DL65</accession>
<evidence type="ECO:0000255" key="1"/>
<evidence type="ECO:0000305" key="2"/>
<proteinExistence type="inferred from homology"/>
<name>YBCL_BACSU</name>
<sequence length="390" mass="41409">MSNTWKIYILAIVSFLVGTSEYIISGILDQIAHTLGITLAAAGQLITIFSLVYALSTPVLMALTASMDRRKLMMYALGLFVFGNVLAFVLPGYGWFIAARIIMAMGAGVVVVTALTIAAKIASEGKQGSAIATVVMGFTASLIIGVPLGRMIAVALGWKSVFGAIALLGLIAMVVIFFTLPYTEGDKPVPLLQQLALFKKRKVAMGLSITFFWLGGYSVAYTYLSPYLLNISGINGKLLSGVLLIFGIASLVGSKFGGYSTDKWGVPFTLVGGMTLHIVTLILLSLVTHSYIGVLVILILWSFAAWSTGPTQQFHLATIEPEMSGVLLSMNQSMMQFAMAVGAGIGGVFVENVSLASITWVGALGVMIAIIASLLIFNSQPKQALKDINQ</sequence>
<comment type="subcellular location">
    <subcellularLocation>
        <location evidence="2">Cell membrane</location>
        <topology evidence="2">Multi-pass membrane protein</topology>
    </subcellularLocation>
</comment>
<comment type="similarity">
    <text evidence="2">Belongs to the major facilitator superfamily.</text>
</comment>
<organism>
    <name type="scientific">Bacillus subtilis (strain 168)</name>
    <dbReference type="NCBI Taxonomy" id="224308"/>
    <lineage>
        <taxon>Bacteria</taxon>
        <taxon>Bacillati</taxon>
        <taxon>Bacillota</taxon>
        <taxon>Bacilli</taxon>
        <taxon>Bacillales</taxon>
        <taxon>Bacillaceae</taxon>
        <taxon>Bacillus</taxon>
    </lineage>
</organism>
<gene>
    <name type="primary">ybcL</name>
    <name type="ordered locus">BSU01890</name>
</gene>
<reference key="1">
    <citation type="submission" date="1997-07" db="EMBL/GenBank/DDBJ databases">
        <title>Sequence analysis of the 70kb region between 17 and 23 degree of the Bacillus subtilis chromosome.</title>
        <authorList>
            <person name="Haga K."/>
            <person name="Liu H."/>
            <person name="Yasumoto K."/>
            <person name="Takahashi H."/>
            <person name="Yoshikawa H."/>
        </authorList>
    </citation>
    <scope>NUCLEOTIDE SEQUENCE [GENOMIC DNA]</scope>
    <source>
        <strain>168</strain>
    </source>
</reference>
<reference key="2">
    <citation type="journal article" date="1997" name="Nature">
        <title>The complete genome sequence of the Gram-positive bacterium Bacillus subtilis.</title>
        <authorList>
            <person name="Kunst F."/>
            <person name="Ogasawara N."/>
            <person name="Moszer I."/>
            <person name="Albertini A.M."/>
            <person name="Alloni G."/>
            <person name="Azevedo V."/>
            <person name="Bertero M.G."/>
            <person name="Bessieres P."/>
            <person name="Bolotin A."/>
            <person name="Borchert S."/>
            <person name="Borriss R."/>
            <person name="Boursier L."/>
            <person name="Brans A."/>
            <person name="Braun M."/>
            <person name="Brignell S.C."/>
            <person name="Bron S."/>
            <person name="Brouillet S."/>
            <person name="Bruschi C.V."/>
            <person name="Caldwell B."/>
            <person name="Capuano V."/>
            <person name="Carter N.M."/>
            <person name="Choi S.-K."/>
            <person name="Codani J.-J."/>
            <person name="Connerton I.F."/>
            <person name="Cummings N.J."/>
            <person name="Daniel R.A."/>
            <person name="Denizot F."/>
            <person name="Devine K.M."/>
            <person name="Duesterhoeft A."/>
            <person name="Ehrlich S.D."/>
            <person name="Emmerson P.T."/>
            <person name="Entian K.-D."/>
            <person name="Errington J."/>
            <person name="Fabret C."/>
            <person name="Ferrari E."/>
            <person name="Foulger D."/>
            <person name="Fritz C."/>
            <person name="Fujita M."/>
            <person name="Fujita Y."/>
            <person name="Fuma S."/>
            <person name="Galizzi A."/>
            <person name="Galleron N."/>
            <person name="Ghim S.-Y."/>
            <person name="Glaser P."/>
            <person name="Goffeau A."/>
            <person name="Golightly E.J."/>
            <person name="Grandi G."/>
            <person name="Guiseppi G."/>
            <person name="Guy B.J."/>
            <person name="Haga K."/>
            <person name="Haiech J."/>
            <person name="Harwood C.R."/>
            <person name="Henaut A."/>
            <person name="Hilbert H."/>
            <person name="Holsappel S."/>
            <person name="Hosono S."/>
            <person name="Hullo M.-F."/>
            <person name="Itaya M."/>
            <person name="Jones L.-M."/>
            <person name="Joris B."/>
            <person name="Karamata D."/>
            <person name="Kasahara Y."/>
            <person name="Klaerr-Blanchard M."/>
            <person name="Klein C."/>
            <person name="Kobayashi Y."/>
            <person name="Koetter P."/>
            <person name="Koningstein G."/>
            <person name="Krogh S."/>
            <person name="Kumano M."/>
            <person name="Kurita K."/>
            <person name="Lapidus A."/>
            <person name="Lardinois S."/>
            <person name="Lauber J."/>
            <person name="Lazarevic V."/>
            <person name="Lee S.-M."/>
            <person name="Levine A."/>
            <person name="Liu H."/>
            <person name="Masuda S."/>
            <person name="Mauel C."/>
            <person name="Medigue C."/>
            <person name="Medina N."/>
            <person name="Mellado R.P."/>
            <person name="Mizuno M."/>
            <person name="Moestl D."/>
            <person name="Nakai S."/>
            <person name="Noback M."/>
            <person name="Noone D."/>
            <person name="O'Reilly M."/>
            <person name="Ogawa K."/>
            <person name="Ogiwara A."/>
            <person name="Oudega B."/>
            <person name="Park S.-H."/>
            <person name="Parro V."/>
            <person name="Pohl T.M."/>
            <person name="Portetelle D."/>
            <person name="Porwollik S."/>
            <person name="Prescott A.M."/>
            <person name="Presecan E."/>
            <person name="Pujic P."/>
            <person name="Purnelle B."/>
            <person name="Rapoport G."/>
            <person name="Rey M."/>
            <person name="Reynolds S."/>
            <person name="Rieger M."/>
            <person name="Rivolta C."/>
            <person name="Rocha E."/>
            <person name="Roche B."/>
            <person name="Rose M."/>
            <person name="Sadaie Y."/>
            <person name="Sato T."/>
            <person name="Scanlan E."/>
            <person name="Schleich S."/>
            <person name="Schroeter R."/>
            <person name="Scoffone F."/>
            <person name="Sekiguchi J."/>
            <person name="Sekowska A."/>
            <person name="Seror S.J."/>
            <person name="Serror P."/>
            <person name="Shin B.-S."/>
            <person name="Soldo B."/>
            <person name="Sorokin A."/>
            <person name="Tacconi E."/>
            <person name="Takagi T."/>
            <person name="Takahashi H."/>
            <person name="Takemaru K."/>
            <person name="Takeuchi M."/>
            <person name="Tamakoshi A."/>
            <person name="Tanaka T."/>
            <person name="Terpstra P."/>
            <person name="Tognoni A."/>
            <person name="Tosato V."/>
            <person name="Uchiyama S."/>
            <person name="Vandenbol M."/>
            <person name="Vannier F."/>
            <person name="Vassarotti A."/>
            <person name="Viari A."/>
            <person name="Wambutt R."/>
            <person name="Wedler E."/>
            <person name="Wedler H."/>
            <person name="Weitzenegger T."/>
            <person name="Winters P."/>
            <person name="Wipat A."/>
            <person name="Yamamoto H."/>
            <person name="Yamane K."/>
            <person name="Yasumoto K."/>
            <person name="Yata K."/>
            <person name="Yoshida K."/>
            <person name="Yoshikawa H.-F."/>
            <person name="Zumstein E."/>
            <person name="Yoshikawa H."/>
            <person name="Danchin A."/>
        </authorList>
    </citation>
    <scope>NUCLEOTIDE SEQUENCE [LARGE SCALE GENOMIC DNA]</scope>
    <source>
        <strain>168</strain>
    </source>
</reference>
<keyword id="KW-1003">Cell membrane</keyword>
<keyword id="KW-0472">Membrane</keyword>
<keyword id="KW-1185">Reference proteome</keyword>
<keyword id="KW-0812">Transmembrane</keyword>
<keyword id="KW-1133">Transmembrane helix</keyword>
<keyword id="KW-0813">Transport</keyword>
<protein>
    <recommendedName>
        <fullName>Uncharacterized MFS-type transporter YbcL</fullName>
    </recommendedName>
</protein>
<feature type="chain" id="PRO_0000351506" description="Uncharacterized MFS-type transporter YbcL">
    <location>
        <begin position="1"/>
        <end position="390"/>
    </location>
</feature>
<feature type="transmembrane region" description="Helical" evidence="1">
    <location>
        <begin position="7"/>
        <end position="27"/>
    </location>
</feature>
<feature type="transmembrane region" description="Helical" evidence="1">
    <location>
        <begin position="35"/>
        <end position="55"/>
    </location>
</feature>
<feature type="transmembrane region" description="Helical" evidence="1">
    <location>
        <begin position="77"/>
        <end position="97"/>
    </location>
</feature>
<feature type="transmembrane region" description="Helical" evidence="1">
    <location>
        <begin position="101"/>
        <end position="121"/>
    </location>
</feature>
<feature type="transmembrane region" description="Helical" evidence="1">
    <location>
        <begin position="128"/>
        <end position="148"/>
    </location>
</feature>
<feature type="transmembrane region" description="Helical" evidence="1">
    <location>
        <begin position="161"/>
        <end position="181"/>
    </location>
</feature>
<feature type="transmembrane region" description="Helical" evidence="1">
    <location>
        <begin position="203"/>
        <end position="223"/>
    </location>
</feature>
<feature type="transmembrane region" description="Helical" evidence="1">
    <location>
        <begin position="238"/>
        <end position="258"/>
    </location>
</feature>
<feature type="transmembrane region" description="Helical" evidence="1">
    <location>
        <begin position="281"/>
        <end position="301"/>
    </location>
</feature>
<feature type="transmembrane region" description="Helical" evidence="1">
    <location>
        <begin position="335"/>
        <end position="355"/>
    </location>
</feature>
<feature type="transmembrane region" description="Helical" evidence="1">
    <location>
        <begin position="357"/>
        <end position="377"/>
    </location>
</feature>